<keyword id="KW-1185">Reference proteome</keyword>
<keyword id="KW-0687">Ribonucleoprotein</keyword>
<keyword id="KW-0689">Ribosomal protein</keyword>
<keyword id="KW-0694">RNA-binding</keyword>
<keyword id="KW-0699">rRNA-binding</keyword>
<proteinExistence type="inferred from homology"/>
<gene>
    <name evidence="1" type="primary">rpsR</name>
    <name type="ordered locus">Sden_0517</name>
</gene>
<reference key="1">
    <citation type="submission" date="2006-03" db="EMBL/GenBank/DDBJ databases">
        <title>Complete sequence of Shewanella denitrificans OS217.</title>
        <authorList>
            <consortium name="US DOE Joint Genome Institute"/>
            <person name="Copeland A."/>
            <person name="Lucas S."/>
            <person name="Lapidus A."/>
            <person name="Barry K."/>
            <person name="Detter J.C."/>
            <person name="Glavina del Rio T."/>
            <person name="Hammon N."/>
            <person name="Israni S."/>
            <person name="Dalin E."/>
            <person name="Tice H."/>
            <person name="Pitluck S."/>
            <person name="Brettin T."/>
            <person name="Bruce D."/>
            <person name="Han C."/>
            <person name="Tapia R."/>
            <person name="Gilna P."/>
            <person name="Kiss H."/>
            <person name="Schmutz J."/>
            <person name="Larimer F."/>
            <person name="Land M."/>
            <person name="Hauser L."/>
            <person name="Kyrpides N."/>
            <person name="Lykidis A."/>
            <person name="Richardson P."/>
        </authorList>
    </citation>
    <scope>NUCLEOTIDE SEQUENCE [LARGE SCALE GENOMIC DNA]</scope>
    <source>
        <strain>OS217 / ATCC BAA-1090 / DSM 15013</strain>
    </source>
</reference>
<organism>
    <name type="scientific">Shewanella denitrificans (strain OS217 / ATCC BAA-1090 / DSM 15013)</name>
    <dbReference type="NCBI Taxonomy" id="318161"/>
    <lineage>
        <taxon>Bacteria</taxon>
        <taxon>Pseudomonadati</taxon>
        <taxon>Pseudomonadota</taxon>
        <taxon>Gammaproteobacteria</taxon>
        <taxon>Alteromonadales</taxon>
        <taxon>Shewanellaceae</taxon>
        <taxon>Shewanella</taxon>
    </lineage>
</organism>
<protein>
    <recommendedName>
        <fullName evidence="1">Small ribosomal subunit protein bS18</fullName>
    </recommendedName>
    <alternativeName>
        <fullName evidence="2">30S ribosomal protein S18</fullName>
    </alternativeName>
</protein>
<name>RS18_SHEDO</name>
<feature type="chain" id="PRO_1000003602" description="Small ribosomal subunit protein bS18">
    <location>
        <begin position="1"/>
        <end position="75"/>
    </location>
</feature>
<accession>Q12RW7</accession>
<sequence>MARYFRRRKFCRFTSEGVAEIDYKDIVTLKNYITESGKIVPSRITGTSAKYQRQLARAIKRARYLSLLPYTDLHQ</sequence>
<comment type="function">
    <text evidence="1">Binds as a heterodimer with protein bS6 to the central domain of the 16S rRNA, where it helps stabilize the platform of the 30S subunit.</text>
</comment>
<comment type="subunit">
    <text evidence="1">Part of the 30S ribosomal subunit. Forms a tight heterodimer with protein bS6.</text>
</comment>
<comment type="similarity">
    <text evidence="1">Belongs to the bacterial ribosomal protein bS18 family.</text>
</comment>
<evidence type="ECO:0000255" key="1">
    <source>
        <dbReference type="HAMAP-Rule" id="MF_00270"/>
    </source>
</evidence>
<evidence type="ECO:0000305" key="2"/>
<dbReference type="EMBL" id="CP000302">
    <property type="protein sequence ID" value="ABE53809.1"/>
    <property type="molecule type" value="Genomic_DNA"/>
</dbReference>
<dbReference type="RefSeq" id="WP_011494975.1">
    <property type="nucleotide sequence ID" value="NC_007954.1"/>
</dbReference>
<dbReference type="SMR" id="Q12RW7"/>
<dbReference type="STRING" id="318161.Sden_0517"/>
<dbReference type="KEGG" id="sdn:Sden_0517"/>
<dbReference type="eggNOG" id="COG0238">
    <property type="taxonomic scope" value="Bacteria"/>
</dbReference>
<dbReference type="HOGENOM" id="CLU_148710_2_3_6"/>
<dbReference type="OrthoDB" id="9812008at2"/>
<dbReference type="Proteomes" id="UP000001982">
    <property type="component" value="Chromosome"/>
</dbReference>
<dbReference type="GO" id="GO:0022627">
    <property type="term" value="C:cytosolic small ribosomal subunit"/>
    <property type="evidence" value="ECO:0007669"/>
    <property type="project" value="TreeGrafter"/>
</dbReference>
<dbReference type="GO" id="GO:0070181">
    <property type="term" value="F:small ribosomal subunit rRNA binding"/>
    <property type="evidence" value="ECO:0007669"/>
    <property type="project" value="TreeGrafter"/>
</dbReference>
<dbReference type="GO" id="GO:0003735">
    <property type="term" value="F:structural constituent of ribosome"/>
    <property type="evidence" value="ECO:0007669"/>
    <property type="project" value="InterPro"/>
</dbReference>
<dbReference type="GO" id="GO:0006412">
    <property type="term" value="P:translation"/>
    <property type="evidence" value="ECO:0007669"/>
    <property type="project" value="UniProtKB-UniRule"/>
</dbReference>
<dbReference type="FunFam" id="4.10.640.10:FF:000001">
    <property type="entry name" value="30S ribosomal protein S18"/>
    <property type="match status" value="1"/>
</dbReference>
<dbReference type="Gene3D" id="4.10.640.10">
    <property type="entry name" value="Ribosomal protein S18"/>
    <property type="match status" value="1"/>
</dbReference>
<dbReference type="HAMAP" id="MF_00270">
    <property type="entry name" value="Ribosomal_bS18"/>
    <property type="match status" value="1"/>
</dbReference>
<dbReference type="InterPro" id="IPR001648">
    <property type="entry name" value="Ribosomal_bS18"/>
</dbReference>
<dbReference type="InterPro" id="IPR018275">
    <property type="entry name" value="Ribosomal_bS18_CS"/>
</dbReference>
<dbReference type="InterPro" id="IPR036870">
    <property type="entry name" value="Ribosomal_bS18_sf"/>
</dbReference>
<dbReference type="NCBIfam" id="TIGR00165">
    <property type="entry name" value="S18"/>
    <property type="match status" value="1"/>
</dbReference>
<dbReference type="PANTHER" id="PTHR13479">
    <property type="entry name" value="30S RIBOSOMAL PROTEIN S18"/>
    <property type="match status" value="1"/>
</dbReference>
<dbReference type="PANTHER" id="PTHR13479:SF40">
    <property type="entry name" value="SMALL RIBOSOMAL SUBUNIT PROTEIN BS18M"/>
    <property type="match status" value="1"/>
</dbReference>
<dbReference type="Pfam" id="PF01084">
    <property type="entry name" value="Ribosomal_S18"/>
    <property type="match status" value="1"/>
</dbReference>
<dbReference type="PRINTS" id="PR00974">
    <property type="entry name" value="RIBOSOMALS18"/>
</dbReference>
<dbReference type="SUPFAM" id="SSF46911">
    <property type="entry name" value="Ribosomal protein S18"/>
    <property type="match status" value="1"/>
</dbReference>
<dbReference type="PROSITE" id="PS00057">
    <property type="entry name" value="RIBOSOMAL_S18"/>
    <property type="match status" value="1"/>
</dbReference>